<proteinExistence type="inferred from homology"/>
<reference key="1">
    <citation type="journal article" date="2008" name="BMC Genomics">
        <title>The genome of Aeromonas salmonicida subsp. salmonicida A449: insights into the evolution of a fish pathogen.</title>
        <authorList>
            <person name="Reith M.E."/>
            <person name="Singh R.K."/>
            <person name="Curtis B."/>
            <person name="Boyd J.M."/>
            <person name="Bouevitch A."/>
            <person name="Kimball J."/>
            <person name="Munholland J."/>
            <person name="Murphy C."/>
            <person name="Sarty D."/>
            <person name="Williams J."/>
            <person name="Nash J.H."/>
            <person name="Johnson S.C."/>
            <person name="Brown L.L."/>
        </authorList>
    </citation>
    <scope>NUCLEOTIDE SEQUENCE [LARGE SCALE GENOMIC DNA]</scope>
    <source>
        <strain>A449</strain>
    </source>
</reference>
<name>MTLD_AERS4</name>
<sequence length="381" mass="41454">MKTLHFGAGNIGRGFIGKLLADASHQVTFADVNETLIDQLNHRQEYKVHVVGADQKLDVVRNVAAVSSAGHEVIARIITADLVTTAVGPNILDKIASTLAKGLQARFDAGNLSPLNVIACENMVRGTSHLKQEVLKYLPVAYHATHESCVGFVDSAVDRIVPPAAANDDPLEVTVESFSEWIVDQTQFKGELPQVAGMEPTDNLMAFVERKLFTLNTGHIVTAYLGKLRGYRTIREAIEDPVIRSKVRRAMEESGAVLVKRYGFDPRLHAAYIEKILARFANPYLVDEIDRVGRQPLRKLAAGDRLVKPLLGTLEYGLPSDHLQEGIAAALHYCNADDPQAVELQALLAELGPAQALARVTGLAADSDIVSAIVARYDSLK</sequence>
<gene>
    <name evidence="1" type="primary">mtlD</name>
    <name type="ordered locus">ASA_3756</name>
</gene>
<organism>
    <name type="scientific">Aeromonas salmonicida (strain A449)</name>
    <dbReference type="NCBI Taxonomy" id="382245"/>
    <lineage>
        <taxon>Bacteria</taxon>
        <taxon>Pseudomonadati</taxon>
        <taxon>Pseudomonadota</taxon>
        <taxon>Gammaproteobacteria</taxon>
        <taxon>Aeromonadales</taxon>
        <taxon>Aeromonadaceae</taxon>
        <taxon>Aeromonas</taxon>
    </lineage>
</organism>
<protein>
    <recommendedName>
        <fullName evidence="1">Mannitol-1-phosphate 5-dehydrogenase</fullName>
        <ecNumber evidence="1">1.1.1.17</ecNumber>
    </recommendedName>
</protein>
<keyword id="KW-0520">NAD</keyword>
<keyword id="KW-0560">Oxidoreductase</keyword>
<evidence type="ECO:0000255" key="1">
    <source>
        <dbReference type="HAMAP-Rule" id="MF_00196"/>
    </source>
</evidence>
<feature type="chain" id="PRO_1000011791" description="Mannitol-1-phosphate 5-dehydrogenase">
    <location>
        <begin position="1"/>
        <end position="381"/>
    </location>
</feature>
<feature type="binding site" evidence="1">
    <location>
        <begin position="3"/>
        <end position="14"/>
    </location>
    <ligand>
        <name>NAD(+)</name>
        <dbReference type="ChEBI" id="CHEBI:57540"/>
    </ligand>
</feature>
<accession>A4SS45</accession>
<comment type="catalytic activity">
    <reaction evidence="1">
        <text>D-mannitol 1-phosphate + NAD(+) = beta-D-fructose 6-phosphate + NADH + H(+)</text>
        <dbReference type="Rhea" id="RHEA:19661"/>
        <dbReference type="ChEBI" id="CHEBI:15378"/>
        <dbReference type="ChEBI" id="CHEBI:57540"/>
        <dbReference type="ChEBI" id="CHEBI:57634"/>
        <dbReference type="ChEBI" id="CHEBI:57945"/>
        <dbReference type="ChEBI" id="CHEBI:61381"/>
        <dbReference type="EC" id="1.1.1.17"/>
    </reaction>
</comment>
<comment type="similarity">
    <text evidence="1">Belongs to the mannitol dehydrogenase family.</text>
</comment>
<dbReference type="EC" id="1.1.1.17" evidence="1"/>
<dbReference type="EMBL" id="CP000644">
    <property type="protein sequence ID" value="ABO91717.1"/>
    <property type="molecule type" value="Genomic_DNA"/>
</dbReference>
<dbReference type="RefSeq" id="WP_005315970.1">
    <property type="nucleotide sequence ID" value="NC_009348.1"/>
</dbReference>
<dbReference type="SMR" id="A4SS45"/>
<dbReference type="STRING" id="29491.GCA_000820065_04251"/>
<dbReference type="KEGG" id="asa:ASA_3756"/>
<dbReference type="PATRIC" id="fig|382245.13.peg.3729"/>
<dbReference type="eggNOG" id="COG0246">
    <property type="taxonomic scope" value="Bacteria"/>
</dbReference>
<dbReference type="HOGENOM" id="CLU_036089_2_0_6"/>
<dbReference type="Proteomes" id="UP000000225">
    <property type="component" value="Chromosome"/>
</dbReference>
<dbReference type="GO" id="GO:0005829">
    <property type="term" value="C:cytosol"/>
    <property type="evidence" value="ECO:0007669"/>
    <property type="project" value="TreeGrafter"/>
</dbReference>
<dbReference type="GO" id="GO:0008926">
    <property type="term" value="F:mannitol-1-phosphate 5-dehydrogenase activity"/>
    <property type="evidence" value="ECO:0007669"/>
    <property type="project" value="UniProtKB-UniRule"/>
</dbReference>
<dbReference type="GO" id="GO:0019592">
    <property type="term" value="P:mannitol catabolic process"/>
    <property type="evidence" value="ECO:0007669"/>
    <property type="project" value="TreeGrafter"/>
</dbReference>
<dbReference type="FunFam" id="1.10.1040.10:FF:000009">
    <property type="entry name" value="Mannitol-1-phosphate 5-dehydrogenase"/>
    <property type="match status" value="1"/>
</dbReference>
<dbReference type="FunFam" id="3.40.50.720:FF:000075">
    <property type="entry name" value="Mannitol-1-phosphate 5-dehydrogenase"/>
    <property type="match status" value="1"/>
</dbReference>
<dbReference type="Gene3D" id="1.10.1040.10">
    <property type="entry name" value="N-(1-d-carboxylethyl)-l-norvaline Dehydrogenase, domain 2"/>
    <property type="match status" value="1"/>
</dbReference>
<dbReference type="Gene3D" id="3.40.50.720">
    <property type="entry name" value="NAD(P)-binding Rossmann-like Domain"/>
    <property type="match status" value="1"/>
</dbReference>
<dbReference type="HAMAP" id="MF_00196">
    <property type="entry name" value="Mannitol_dehydrog"/>
    <property type="match status" value="1"/>
</dbReference>
<dbReference type="InterPro" id="IPR008927">
    <property type="entry name" value="6-PGluconate_DH-like_C_sf"/>
</dbReference>
<dbReference type="InterPro" id="IPR013328">
    <property type="entry name" value="6PGD_dom2"/>
</dbReference>
<dbReference type="InterPro" id="IPR023028">
    <property type="entry name" value="Mannitol_1_phos_5_DH"/>
</dbReference>
<dbReference type="InterPro" id="IPR000669">
    <property type="entry name" value="Mannitol_DH"/>
</dbReference>
<dbReference type="InterPro" id="IPR013118">
    <property type="entry name" value="Mannitol_DH_C"/>
</dbReference>
<dbReference type="InterPro" id="IPR023027">
    <property type="entry name" value="Mannitol_DH_CS"/>
</dbReference>
<dbReference type="InterPro" id="IPR013131">
    <property type="entry name" value="Mannitol_DH_N"/>
</dbReference>
<dbReference type="InterPro" id="IPR036291">
    <property type="entry name" value="NAD(P)-bd_dom_sf"/>
</dbReference>
<dbReference type="NCBIfam" id="NF002646">
    <property type="entry name" value="PRK02318.1-2"/>
    <property type="match status" value="1"/>
</dbReference>
<dbReference type="NCBIfam" id="NF002647">
    <property type="entry name" value="PRK02318.1-3"/>
    <property type="match status" value="1"/>
</dbReference>
<dbReference type="NCBIfam" id="NF002650">
    <property type="entry name" value="PRK02318.2-2"/>
    <property type="match status" value="1"/>
</dbReference>
<dbReference type="NCBIfam" id="NF002652">
    <property type="entry name" value="PRK02318.2-5"/>
    <property type="match status" value="1"/>
</dbReference>
<dbReference type="PANTHER" id="PTHR30524:SF0">
    <property type="entry name" value="ALTRONATE OXIDOREDUCTASE-RELATED"/>
    <property type="match status" value="1"/>
</dbReference>
<dbReference type="PANTHER" id="PTHR30524">
    <property type="entry name" value="MANNITOL-1-PHOSPHATE 5-DEHYDROGENASE"/>
    <property type="match status" value="1"/>
</dbReference>
<dbReference type="Pfam" id="PF01232">
    <property type="entry name" value="Mannitol_dh"/>
    <property type="match status" value="1"/>
</dbReference>
<dbReference type="Pfam" id="PF08125">
    <property type="entry name" value="Mannitol_dh_C"/>
    <property type="match status" value="1"/>
</dbReference>
<dbReference type="PRINTS" id="PR00084">
    <property type="entry name" value="MTLDHDRGNASE"/>
</dbReference>
<dbReference type="SUPFAM" id="SSF48179">
    <property type="entry name" value="6-phosphogluconate dehydrogenase C-terminal domain-like"/>
    <property type="match status" value="1"/>
</dbReference>
<dbReference type="SUPFAM" id="SSF51735">
    <property type="entry name" value="NAD(P)-binding Rossmann-fold domains"/>
    <property type="match status" value="1"/>
</dbReference>
<dbReference type="PROSITE" id="PS00974">
    <property type="entry name" value="MANNITOL_DHGENASE"/>
    <property type="match status" value="1"/>
</dbReference>